<organism>
    <name type="scientific">Prochlorococcus marinus (strain MIT 9515)</name>
    <dbReference type="NCBI Taxonomy" id="167542"/>
    <lineage>
        <taxon>Bacteria</taxon>
        <taxon>Bacillati</taxon>
        <taxon>Cyanobacteriota</taxon>
        <taxon>Cyanophyceae</taxon>
        <taxon>Synechococcales</taxon>
        <taxon>Prochlorococcaceae</taxon>
        <taxon>Prochlorococcus</taxon>
    </lineage>
</organism>
<feature type="chain" id="PRO_1000026272" description="Nucleoside diphosphate kinase">
    <location>
        <begin position="1"/>
        <end position="152"/>
    </location>
</feature>
<feature type="active site" description="Pros-phosphohistidine intermediate" evidence="1">
    <location>
        <position position="117"/>
    </location>
</feature>
<feature type="binding site" evidence="1">
    <location>
        <position position="11"/>
    </location>
    <ligand>
        <name>ATP</name>
        <dbReference type="ChEBI" id="CHEBI:30616"/>
    </ligand>
</feature>
<feature type="binding site" evidence="1">
    <location>
        <position position="59"/>
    </location>
    <ligand>
        <name>ATP</name>
        <dbReference type="ChEBI" id="CHEBI:30616"/>
    </ligand>
</feature>
<feature type="binding site" evidence="1">
    <location>
        <position position="87"/>
    </location>
    <ligand>
        <name>ATP</name>
        <dbReference type="ChEBI" id="CHEBI:30616"/>
    </ligand>
</feature>
<feature type="binding site" evidence="1">
    <location>
        <position position="93"/>
    </location>
    <ligand>
        <name>ATP</name>
        <dbReference type="ChEBI" id="CHEBI:30616"/>
    </ligand>
</feature>
<feature type="binding site" evidence="1">
    <location>
        <position position="104"/>
    </location>
    <ligand>
        <name>ATP</name>
        <dbReference type="ChEBI" id="CHEBI:30616"/>
    </ligand>
</feature>
<feature type="binding site" evidence="1">
    <location>
        <position position="114"/>
    </location>
    <ligand>
        <name>ATP</name>
        <dbReference type="ChEBI" id="CHEBI:30616"/>
    </ligand>
</feature>
<protein>
    <recommendedName>
        <fullName evidence="1">Nucleoside diphosphate kinase</fullName>
        <shortName evidence="1">NDK</shortName>
        <shortName evidence="1">NDP kinase</shortName>
        <ecNumber evidence="1">2.7.4.6</ecNumber>
    </recommendedName>
    <alternativeName>
        <fullName evidence="1">Nucleoside-2-P kinase</fullName>
    </alternativeName>
</protein>
<keyword id="KW-0067">ATP-binding</keyword>
<keyword id="KW-0963">Cytoplasm</keyword>
<keyword id="KW-0418">Kinase</keyword>
<keyword id="KW-0460">Magnesium</keyword>
<keyword id="KW-0479">Metal-binding</keyword>
<keyword id="KW-0546">Nucleotide metabolism</keyword>
<keyword id="KW-0547">Nucleotide-binding</keyword>
<keyword id="KW-0597">Phosphoprotein</keyword>
<keyword id="KW-0808">Transferase</keyword>
<proteinExistence type="inferred from homology"/>
<gene>
    <name evidence="1" type="primary">ndk</name>
    <name type="ordered locus">P9515_00531</name>
</gene>
<name>NDK_PROM5</name>
<dbReference type="EC" id="2.7.4.6" evidence="1"/>
<dbReference type="EMBL" id="CP000552">
    <property type="protein sequence ID" value="ABM71262.1"/>
    <property type="molecule type" value="Genomic_DNA"/>
</dbReference>
<dbReference type="RefSeq" id="WP_011819379.1">
    <property type="nucleotide sequence ID" value="NC_008817.1"/>
</dbReference>
<dbReference type="SMR" id="A2BU01"/>
<dbReference type="STRING" id="167542.P9515_00531"/>
<dbReference type="GeneID" id="60200856"/>
<dbReference type="KEGG" id="pmc:P9515_00531"/>
<dbReference type="eggNOG" id="COG0105">
    <property type="taxonomic scope" value="Bacteria"/>
</dbReference>
<dbReference type="HOGENOM" id="CLU_060216_6_3_3"/>
<dbReference type="OrthoDB" id="9801161at2"/>
<dbReference type="Proteomes" id="UP000001589">
    <property type="component" value="Chromosome"/>
</dbReference>
<dbReference type="GO" id="GO:0005737">
    <property type="term" value="C:cytoplasm"/>
    <property type="evidence" value="ECO:0007669"/>
    <property type="project" value="UniProtKB-SubCell"/>
</dbReference>
<dbReference type="GO" id="GO:0005524">
    <property type="term" value="F:ATP binding"/>
    <property type="evidence" value="ECO:0007669"/>
    <property type="project" value="UniProtKB-UniRule"/>
</dbReference>
<dbReference type="GO" id="GO:0046872">
    <property type="term" value="F:metal ion binding"/>
    <property type="evidence" value="ECO:0007669"/>
    <property type="project" value="UniProtKB-KW"/>
</dbReference>
<dbReference type="GO" id="GO:0004550">
    <property type="term" value="F:nucleoside diphosphate kinase activity"/>
    <property type="evidence" value="ECO:0007669"/>
    <property type="project" value="UniProtKB-UniRule"/>
</dbReference>
<dbReference type="GO" id="GO:0006241">
    <property type="term" value="P:CTP biosynthetic process"/>
    <property type="evidence" value="ECO:0007669"/>
    <property type="project" value="UniProtKB-UniRule"/>
</dbReference>
<dbReference type="GO" id="GO:0006183">
    <property type="term" value="P:GTP biosynthetic process"/>
    <property type="evidence" value="ECO:0007669"/>
    <property type="project" value="UniProtKB-UniRule"/>
</dbReference>
<dbReference type="GO" id="GO:0006228">
    <property type="term" value="P:UTP biosynthetic process"/>
    <property type="evidence" value="ECO:0007669"/>
    <property type="project" value="UniProtKB-UniRule"/>
</dbReference>
<dbReference type="CDD" id="cd04413">
    <property type="entry name" value="NDPk_I"/>
    <property type="match status" value="1"/>
</dbReference>
<dbReference type="FunFam" id="3.30.70.141:FF:000002">
    <property type="entry name" value="Nucleoside diphosphate kinase"/>
    <property type="match status" value="1"/>
</dbReference>
<dbReference type="Gene3D" id="3.30.70.141">
    <property type="entry name" value="Nucleoside diphosphate kinase-like domain"/>
    <property type="match status" value="1"/>
</dbReference>
<dbReference type="HAMAP" id="MF_00451">
    <property type="entry name" value="NDP_kinase"/>
    <property type="match status" value="1"/>
</dbReference>
<dbReference type="InterPro" id="IPR034907">
    <property type="entry name" value="NDK-like_dom"/>
</dbReference>
<dbReference type="InterPro" id="IPR036850">
    <property type="entry name" value="NDK-like_dom_sf"/>
</dbReference>
<dbReference type="InterPro" id="IPR001564">
    <property type="entry name" value="Nucleoside_diP_kinase"/>
</dbReference>
<dbReference type="InterPro" id="IPR023005">
    <property type="entry name" value="Nucleoside_diP_kinase_AS"/>
</dbReference>
<dbReference type="NCBIfam" id="NF001908">
    <property type="entry name" value="PRK00668.1"/>
    <property type="match status" value="1"/>
</dbReference>
<dbReference type="PANTHER" id="PTHR11349">
    <property type="entry name" value="NUCLEOSIDE DIPHOSPHATE KINASE"/>
    <property type="match status" value="1"/>
</dbReference>
<dbReference type="Pfam" id="PF00334">
    <property type="entry name" value="NDK"/>
    <property type="match status" value="1"/>
</dbReference>
<dbReference type="PRINTS" id="PR01243">
    <property type="entry name" value="NUCDPKINASE"/>
</dbReference>
<dbReference type="SMART" id="SM00562">
    <property type="entry name" value="NDK"/>
    <property type="match status" value="1"/>
</dbReference>
<dbReference type="SUPFAM" id="SSF54919">
    <property type="entry name" value="Nucleoside diphosphate kinase, NDK"/>
    <property type="match status" value="1"/>
</dbReference>
<dbReference type="PROSITE" id="PS00469">
    <property type="entry name" value="NDPK"/>
    <property type="match status" value="1"/>
</dbReference>
<dbReference type="PROSITE" id="PS51374">
    <property type="entry name" value="NDPK_LIKE"/>
    <property type="match status" value="1"/>
</dbReference>
<accession>A2BU01</accession>
<evidence type="ECO:0000255" key="1">
    <source>
        <dbReference type="HAMAP-Rule" id="MF_00451"/>
    </source>
</evidence>
<comment type="function">
    <text evidence="1">Major role in the synthesis of nucleoside triphosphates other than ATP. The ATP gamma phosphate is transferred to the NDP beta phosphate via a ping-pong mechanism, using a phosphorylated active-site intermediate.</text>
</comment>
<comment type="catalytic activity">
    <reaction evidence="1">
        <text>a 2'-deoxyribonucleoside 5'-diphosphate + ATP = a 2'-deoxyribonucleoside 5'-triphosphate + ADP</text>
        <dbReference type="Rhea" id="RHEA:44640"/>
        <dbReference type="ChEBI" id="CHEBI:30616"/>
        <dbReference type="ChEBI" id="CHEBI:61560"/>
        <dbReference type="ChEBI" id="CHEBI:73316"/>
        <dbReference type="ChEBI" id="CHEBI:456216"/>
        <dbReference type="EC" id="2.7.4.6"/>
    </reaction>
</comment>
<comment type="catalytic activity">
    <reaction evidence="1">
        <text>a ribonucleoside 5'-diphosphate + ATP = a ribonucleoside 5'-triphosphate + ADP</text>
        <dbReference type="Rhea" id="RHEA:18113"/>
        <dbReference type="ChEBI" id="CHEBI:30616"/>
        <dbReference type="ChEBI" id="CHEBI:57930"/>
        <dbReference type="ChEBI" id="CHEBI:61557"/>
        <dbReference type="ChEBI" id="CHEBI:456216"/>
        <dbReference type="EC" id="2.7.4.6"/>
    </reaction>
</comment>
<comment type="cofactor">
    <cofactor evidence="1">
        <name>Mg(2+)</name>
        <dbReference type="ChEBI" id="CHEBI:18420"/>
    </cofactor>
</comment>
<comment type="subunit">
    <text evidence="1">Homotetramer.</text>
</comment>
<comment type="subcellular location">
    <subcellularLocation>
        <location evidence="1">Cytoplasm</location>
    </subcellularLocation>
</comment>
<comment type="similarity">
    <text evidence="1">Belongs to the NDK family.</text>
</comment>
<sequence>MIKERTFLAIKPDGVQRGYIAEIIGRFEKKGFKLVGLKQLIPSKQLAQDHYGVHRERPFFKDLVNFISSGPVVAMIWEGEGVILSARKIIGATKPLEAEPGTIRGDLAIDIGRNIIHGSDGEETAKFEINLWFDQHEICDWETSDSEWRVES</sequence>
<reference key="1">
    <citation type="journal article" date="2007" name="PLoS Genet.">
        <title>Patterns and implications of gene gain and loss in the evolution of Prochlorococcus.</title>
        <authorList>
            <person name="Kettler G.C."/>
            <person name="Martiny A.C."/>
            <person name="Huang K."/>
            <person name="Zucker J."/>
            <person name="Coleman M.L."/>
            <person name="Rodrigue S."/>
            <person name="Chen F."/>
            <person name="Lapidus A."/>
            <person name="Ferriera S."/>
            <person name="Johnson J."/>
            <person name="Steglich C."/>
            <person name="Church G.M."/>
            <person name="Richardson P."/>
            <person name="Chisholm S.W."/>
        </authorList>
    </citation>
    <scope>NUCLEOTIDE SEQUENCE [LARGE SCALE GENOMIC DNA]</scope>
    <source>
        <strain>MIT 9515</strain>
    </source>
</reference>